<protein>
    <recommendedName>
        <fullName>Tethering factor for nuclear proteasome STS1</fullName>
    </recommendedName>
</protein>
<comment type="function">
    <text evidence="1">Involved in ubiquitin-mediated protein degradation. Regulatory factor in the ubiquitin/proteasome pathway that controls the turnover of proteasome substrates. Targets proteasomes to the nucleus and facilitates the degradation of nuclear proteins (By similarity).</text>
</comment>
<comment type="subunit">
    <text evidence="1">Binds the proteasome.</text>
</comment>
<comment type="subcellular location">
    <subcellularLocation>
        <location evidence="1">Cytoplasm</location>
    </subcellularLocation>
    <subcellularLocation>
        <location evidence="1">Nucleus</location>
    </subcellularLocation>
</comment>
<comment type="similarity">
    <text evidence="3">Belongs to the cut8/STS1 family.</text>
</comment>
<sequence>MSTPAFSLRNPENHARCAKPLRKRKLSPPQIDTPRSFSPSRQKRAKTTKILGQSLPVHRIIETLDRNALQSLLQQVAAANPQVAQSIVDLAPKPDTKDALAVMRAKFDAITAHLPYKCSAESDYSYTRVKPYLCEFLSTLSDFILNMLPPLEVDLQPACTILDAITEMIHKLPNFSNSEFQYTRAMAYDQLSTSWQILLDAADERLLVRVEAEMGLSRRLQKHNELSGGKLTQAVESAGRGQSPLLGGLITVDYSSFRH</sequence>
<organism>
    <name type="scientific">Clavispora lusitaniae (strain ATCC 42720)</name>
    <name type="common">Yeast</name>
    <name type="synonym">Candida lusitaniae</name>
    <dbReference type="NCBI Taxonomy" id="306902"/>
    <lineage>
        <taxon>Eukaryota</taxon>
        <taxon>Fungi</taxon>
        <taxon>Dikarya</taxon>
        <taxon>Ascomycota</taxon>
        <taxon>Saccharomycotina</taxon>
        <taxon>Pichiomycetes</taxon>
        <taxon>Metschnikowiaceae</taxon>
        <taxon>Clavispora</taxon>
    </lineage>
</organism>
<name>STS1_CLAL4</name>
<proteinExistence type="inferred from homology"/>
<evidence type="ECO:0000250" key="1"/>
<evidence type="ECO:0000256" key="2">
    <source>
        <dbReference type="SAM" id="MobiDB-lite"/>
    </source>
</evidence>
<evidence type="ECO:0000305" key="3"/>
<accession>C4YCB9</accession>
<dbReference type="EMBL" id="CH408083">
    <property type="protein sequence ID" value="EEQ41630.1"/>
    <property type="molecule type" value="Genomic_DNA"/>
</dbReference>
<dbReference type="RefSeq" id="XP_002614272.1">
    <property type="nucleotide sequence ID" value="XM_002614226.1"/>
</dbReference>
<dbReference type="SMR" id="C4YCB9"/>
<dbReference type="FunCoup" id="C4YCB9">
    <property type="interactions" value="13"/>
</dbReference>
<dbReference type="STRING" id="306902.C4YCB9"/>
<dbReference type="GeneID" id="8494773"/>
<dbReference type="KEGG" id="clu:CLUG_05758"/>
<dbReference type="VEuPathDB" id="FungiDB:CLUG_05758"/>
<dbReference type="HOGENOM" id="CLU_054606_2_0_1"/>
<dbReference type="InParanoid" id="C4YCB9"/>
<dbReference type="OMA" id="DYTPHFL"/>
<dbReference type="OrthoDB" id="87037at4891"/>
<dbReference type="Proteomes" id="UP000007703">
    <property type="component" value="Unassembled WGS sequence"/>
</dbReference>
<dbReference type="GO" id="GO:0005737">
    <property type="term" value="C:cytoplasm"/>
    <property type="evidence" value="ECO:0007669"/>
    <property type="project" value="UniProtKB-SubCell"/>
</dbReference>
<dbReference type="GO" id="GO:0031965">
    <property type="term" value="C:nuclear membrane"/>
    <property type="evidence" value="ECO:0007669"/>
    <property type="project" value="TreeGrafter"/>
</dbReference>
<dbReference type="GO" id="GO:0070628">
    <property type="term" value="F:proteasome binding"/>
    <property type="evidence" value="ECO:0007669"/>
    <property type="project" value="TreeGrafter"/>
</dbReference>
<dbReference type="GO" id="GO:0071630">
    <property type="term" value="P:nuclear protein quality control by the ubiquitin-proteasome system"/>
    <property type="evidence" value="ECO:0007669"/>
    <property type="project" value="InterPro"/>
</dbReference>
<dbReference type="GO" id="GO:0031144">
    <property type="term" value="P:proteasome localization"/>
    <property type="evidence" value="ECO:0007669"/>
    <property type="project" value="InterPro"/>
</dbReference>
<dbReference type="GO" id="GO:0015031">
    <property type="term" value="P:protein transport"/>
    <property type="evidence" value="ECO:0007669"/>
    <property type="project" value="UniProtKB-KW"/>
</dbReference>
<dbReference type="Gene3D" id="1.20.58.1590">
    <property type="entry name" value="Tethering factor for nuclear proteasome Cut8/Sts1"/>
    <property type="match status" value="1"/>
</dbReference>
<dbReference type="InterPro" id="IPR013868">
    <property type="entry name" value="Cut8/Sts1_fam"/>
</dbReference>
<dbReference type="InterPro" id="IPR038422">
    <property type="entry name" value="Cut8/Sts1_sf"/>
</dbReference>
<dbReference type="PANTHER" id="PTHR28032">
    <property type="entry name" value="FI02826P"/>
    <property type="match status" value="1"/>
</dbReference>
<dbReference type="PANTHER" id="PTHR28032:SF1">
    <property type="entry name" value="FI02826P"/>
    <property type="match status" value="1"/>
</dbReference>
<dbReference type="Pfam" id="PF08559">
    <property type="entry name" value="Cut8"/>
    <property type="match status" value="1"/>
</dbReference>
<feature type="chain" id="PRO_0000409406" description="Tethering factor for nuclear proteasome STS1">
    <location>
        <begin position="1"/>
        <end position="259"/>
    </location>
</feature>
<feature type="region of interest" description="Disordered" evidence="2">
    <location>
        <begin position="1"/>
        <end position="46"/>
    </location>
</feature>
<feature type="compositionally biased region" description="Basic residues" evidence="2">
    <location>
        <begin position="16"/>
        <end position="26"/>
    </location>
</feature>
<reference key="1">
    <citation type="journal article" date="2009" name="Nature">
        <title>Evolution of pathogenicity and sexual reproduction in eight Candida genomes.</title>
        <authorList>
            <person name="Butler G."/>
            <person name="Rasmussen M.D."/>
            <person name="Lin M.F."/>
            <person name="Santos M.A.S."/>
            <person name="Sakthikumar S."/>
            <person name="Munro C.A."/>
            <person name="Rheinbay E."/>
            <person name="Grabherr M."/>
            <person name="Forche A."/>
            <person name="Reedy J.L."/>
            <person name="Agrafioti I."/>
            <person name="Arnaud M.B."/>
            <person name="Bates S."/>
            <person name="Brown A.J.P."/>
            <person name="Brunke S."/>
            <person name="Costanzo M.C."/>
            <person name="Fitzpatrick D.A."/>
            <person name="de Groot P.W.J."/>
            <person name="Harris D."/>
            <person name="Hoyer L.L."/>
            <person name="Hube B."/>
            <person name="Klis F.M."/>
            <person name="Kodira C."/>
            <person name="Lennard N."/>
            <person name="Logue M.E."/>
            <person name="Martin R."/>
            <person name="Neiman A.M."/>
            <person name="Nikolaou E."/>
            <person name="Quail M.A."/>
            <person name="Quinn J."/>
            <person name="Santos M.C."/>
            <person name="Schmitzberger F.F."/>
            <person name="Sherlock G."/>
            <person name="Shah P."/>
            <person name="Silverstein K.A.T."/>
            <person name="Skrzypek M.S."/>
            <person name="Soll D."/>
            <person name="Staggs R."/>
            <person name="Stansfield I."/>
            <person name="Stumpf M.P.H."/>
            <person name="Sudbery P.E."/>
            <person name="Srikantha T."/>
            <person name="Zeng Q."/>
            <person name="Berman J."/>
            <person name="Berriman M."/>
            <person name="Heitman J."/>
            <person name="Gow N.A.R."/>
            <person name="Lorenz M.C."/>
            <person name="Birren B.W."/>
            <person name="Kellis M."/>
            <person name="Cuomo C.A."/>
        </authorList>
    </citation>
    <scope>NUCLEOTIDE SEQUENCE [LARGE SCALE GENOMIC DNA]</scope>
    <source>
        <strain>ATCC 42720</strain>
    </source>
</reference>
<gene>
    <name type="primary">STS1</name>
    <name type="ORF">CLUG_05758</name>
</gene>
<keyword id="KW-0963">Cytoplasm</keyword>
<keyword id="KW-0539">Nucleus</keyword>
<keyword id="KW-0653">Protein transport</keyword>
<keyword id="KW-1185">Reference proteome</keyword>
<keyword id="KW-0813">Transport</keyword>